<sequence length="379" mass="42675">MTNIRKTHPLLKIINSSFVDLPAPSSLSSWWNFGSLLGVCLGVQILTGLFLAMHYTSDTATAFNSVTHICRDVNYGWLLRYLHANGASMFFICLYLHVGRGLYYGSYTYSETWNIGILLLFAVMATAFMGYVLPWGQMSFWGATVITNLLSAIPYIGTDLVQWIWGGFSVDKATLTRFFAFHFLLPFIVTALVMVHLPFLHETGSNNPTGIPSDPDMIHSHPYYTIKDILGFLVMLTALASLVLFSPDLLGDPDNYIPANPLITPPHIKPEWYFLFAYAILRSIPNKLGGVLALVMSILILAIVPILHMSKQRSMMFRPLSQCLFWLLVAVLFTLTWIGGQPVEHPYIIIGQTASTLYFLIILFLMPMISLVENYLLKW</sequence>
<name>CYB_ARTOB</name>
<evidence type="ECO:0000250" key="1"/>
<evidence type="ECO:0000250" key="2">
    <source>
        <dbReference type="UniProtKB" id="P00157"/>
    </source>
</evidence>
<evidence type="ECO:0000255" key="3">
    <source>
        <dbReference type="PROSITE-ProRule" id="PRU00967"/>
    </source>
</evidence>
<evidence type="ECO:0000255" key="4">
    <source>
        <dbReference type="PROSITE-ProRule" id="PRU00968"/>
    </source>
</evidence>
<feature type="chain" id="PRO_0000060638" description="Cytochrome b">
    <location>
        <begin position="1"/>
        <end position="379"/>
    </location>
</feature>
<feature type="transmembrane region" description="Helical" evidence="2">
    <location>
        <begin position="33"/>
        <end position="53"/>
    </location>
</feature>
<feature type="transmembrane region" description="Helical" evidence="2">
    <location>
        <begin position="77"/>
        <end position="98"/>
    </location>
</feature>
<feature type="transmembrane region" description="Helical" evidence="2">
    <location>
        <begin position="113"/>
        <end position="133"/>
    </location>
</feature>
<feature type="transmembrane region" description="Helical" evidence="2">
    <location>
        <begin position="178"/>
        <end position="198"/>
    </location>
</feature>
<feature type="transmembrane region" description="Helical" evidence="2">
    <location>
        <begin position="226"/>
        <end position="246"/>
    </location>
</feature>
<feature type="transmembrane region" description="Helical" evidence="2">
    <location>
        <begin position="288"/>
        <end position="308"/>
    </location>
</feature>
<feature type="transmembrane region" description="Helical" evidence="2">
    <location>
        <begin position="320"/>
        <end position="340"/>
    </location>
</feature>
<feature type="transmembrane region" description="Helical" evidence="2">
    <location>
        <begin position="347"/>
        <end position="367"/>
    </location>
</feature>
<feature type="binding site" description="axial binding residue" evidence="2">
    <location>
        <position position="83"/>
    </location>
    <ligand>
        <name>heme b</name>
        <dbReference type="ChEBI" id="CHEBI:60344"/>
        <label>b562</label>
    </ligand>
    <ligandPart>
        <name>Fe</name>
        <dbReference type="ChEBI" id="CHEBI:18248"/>
    </ligandPart>
</feature>
<feature type="binding site" description="axial binding residue" evidence="2">
    <location>
        <position position="97"/>
    </location>
    <ligand>
        <name>heme b</name>
        <dbReference type="ChEBI" id="CHEBI:60344"/>
        <label>b566</label>
    </ligand>
    <ligandPart>
        <name>Fe</name>
        <dbReference type="ChEBI" id="CHEBI:18248"/>
    </ligandPart>
</feature>
<feature type="binding site" description="axial binding residue" evidence="2">
    <location>
        <position position="182"/>
    </location>
    <ligand>
        <name>heme b</name>
        <dbReference type="ChEBI" id="CHEBI:60344"/>
        <label>b562</label>
    </ligand>
    <ligandPart>
        <name>Fe</name>
        <dbReference type="ChEBI" id="CHEBI:18248"/>
    </ligandPart>
</feature>
<feature type="binding site" description="axial binding residue" evidence="2">
    <location>
        <position position="196"/>
    </location>
    <ligand>
        <name>heme b</name>
        <dbReference type="ChEBI" id="CHEBI:60344"/>
        <label>b566</label>
    </ligand>
    <ligandPart>
        <name>Fe</name>
        <dbReference type="ChEBI" id="CHEBI:18248"/>
    </ligandPart>
</feature>
<feature type="binding site" evidence="2">
    <location>
        <position position="201"/>
    </location>
    <ligand>
        <name>a ubiquinone</name>
        <dbReference type="ChEBI" id="CHEBI:16389"/>
    </ligand>
</feature>
<feature type="sequence variant" description="In strain: Isolate TK 17308.">
    <original>T</original>
    <variation>P</variation>
    <location>
        <position position="176"/>
    </location>
</feature>
<feature type="sequence variant" description="In strain: Isolate TK 17308.">
    <original>HLP</original>
    <variation>LLL</variation>
    <location>
        <begin position="196"/>
        <end position="198"/>
    </location>
</feature>
<feature type="sequence variant" description="In strain: Isolate TK 17308.">
    <original>A</original>
    <variation>S</variation>
    <location>
        <position position="240"/>
    </location>
</feature>
<feature type="sequence variant" description="In strain: Isolate TK 17308.">
    <original>T</original>
    <variation>P</variation>
    <location>
        <position position="264"/>
    </location>
</feature>
<feature type="sequence variant" description="In strain: Isolate TK 17308.">
    <original>H</original>
    <variation>Y</variation>
    <location>
        <position position="267"/>
    </location>
</feature>
<feature type="sequence variant" description="In strain: Isolate TK 17308.">
    <original>P</original>
    <variation>T</variation>
    <location>
        <position position="270"/>
    </location>
</feature>
<feature type="sequence variant" description="In strain: Isolate TK 17308.">
    <original>T</original>
    <variation>V</variation>
    <location>
        <position position="356"/>
    </location>
</feature>
<organism>
    <name type="scientific">Artibeus obscurus</name>
    <name type="common">Dark fruit-eating bat</name>
    <dbReference type="NCBI Taxonomy" id="40228"/>
    <lineage>
        <taxon>Eukaryota</taxon>
        <taxon>Metazoa</taxon>
        <taxon>Chordata</taxon>
        <taxon>Craniata</taxon>
        <taxon>Vertebrata</taxon>
        <taxon>Euteleostomi</taxon>
        <taxon>Mammalia</taxon>
        <taxon>Eutheria</taxon>
        <taxon>Laurasiatheria</taxon>
        <taxon>Chiroptera</taxon>
        <taxon>Yangochiroptera</taxon>
        <taxon>Phyllostomidae</taxon>
        <taxon>Stenodermatinae</taxon>
        <taxon>Artibeus</taxon>
    </lineage>
</organism>
<comment type="function">
    <text evidence="2">Component of the ubiquinol-cytochrome c reductase complex (complex III or cytochrome b-c1 complex) that is part of the mitochondrial respiratory chain. The b-c1 complex mediates electron transfer from ubiquinol to cytochrome c. Contributes to the generation of a proton gradient across the mitochondrial membrane that is then used for ATP synthesis.</text>
</comment>
<comment type="cofactor">
    <cofactor evidence="2">
        <name>heme b</name>
        <dbReference type="ChEBI" id="CHEBI:60344"/>
    </cofactor>
    <text evidence="2">Binds 2 heme b groups non-covalently.</text>
</comment>
<comment type="subunit">
    <text evidence="2">The cytochrome bc1 complex contains 11 subunits: 3 respiratory subunits (MT-CYB, CYC1 and UQCRFS1), 2 core proteins (UQCRC1 and UQCRC2) and 6 low-molecular weight proteins (UQCRH/QCR6, UQCRB/QCR7, UQCRQ/QCR8, UQCR10/QCR9, UQCR11/QCR10 and a cleavage product of UQCRFS1). This cytochrome bc1 complex then forms a dimer.</text>
</comment>
<comment type="subcellular location">
    <subcellularLocation>
        <location evidence="2">Mitochondrion inner membrane</location>
        <topology evidence="2">Multi-pass membrane protein</topology>
    </subcellularLocation>
</comment>
<comment type="miscellaneous">
    <text evidence="1">Heme 1 (or BL or b562) is low-potential and absorbs at about 562 nm, and heme 2 (or BH or b566) is high-potential and absorbs at about 566 nm.</text>
</comment>
<comment type="similarity">
    <text evidence="3 4">Belongs to the cytochrome b family.</text>
</comment>
<comment type="caution">
    <text evidence="2">The full-length protein contains only eight transmembrane helices, not nine as predicted by bioinformatics tools.</text>
</comment>
<geneLocation type="mitochondrion"/>
<accession>Q95741</accession>
<accession>Q33695</accession>
<accession>Q95742</accession>
<keyword id="KW-0249">Electron transport</keyword>
<keyword id="KW-0349">Heme</keyword>
<keyword id="KW-0408">Iron</keyword>
<keyword id="KW-0472">Membrane</keyword>
<keyword id="KW-0479">Metal-binding</keyword>
<keyword id="KW-0496">Mitochondrion</keyword>
<keyword id="KW-0999">Mitochondrion inner membrane</keyword>
<keyword id="KW-0679">Respiratory chain</keyword>
<keyword id="KW-0812">Transmembrane</keyword>
<keyword id="KW-1133">Transmembrane helix</keyword>
<keyword id="KW-0813">Transport</keyword>
<keyword id="KW-0830">Ubiquinone</keyword>
<reference key="1">
    <citation type="journal article" date="1993" name="Mol. Biol. Evol.">
        <title>Molecular phylogenetics of Stenodermatini bat genera: congruence of data from nuclear and mitochondrial DNA.</title>
        <authorList>
            <person name="den Bussche R.A."/>
            <person name="Baker R.J."/>
            <person name="Wichman H.A."/>
            <person name="Hamilton M.J."/>
        </authorList>
    </citation>
    <scope>NUCLEOTIDE SEQUENCE [GENOMIC DNA]</scope>
    <source>
        <strain>Isolate TK 17308</strain>
        <strain>Isolate TK 18787</strain>
        <tissue>Muscle</tissue>
    </source>
</reference>
<dbReference type="EMBL" id="L19505">
    <property type="protein sequence ID" value="AAA31611.1"/>
    <property type="molecule type" value="Genomic_DNA"/>
</dbReference>
<dbReference type="EMBL" id="U66507">
    <property type="protein sequence ID" value="AAB06782.1"/>
    <property type="molecule type" value="Genomic_DNA"/>
</dbReference>
<dbReference type="EMBL" id="U66506">
    <property type="protein sequence ID" value="AAB06781.1"/>
    <property type="molecule type" value="Genomic_DNA"/>
</dbReference>
<dbReference type="SMR" id="Q95741"/>
<dbReference type="GO" id="GO:0005743">
    <property type="term" value="C:mitochondrial inner membrane"/>
    <property type="evidence" value="ECO:0007669"/>
    <property type="project" value="UniProtKB-SubCell"/>
</dbReference>
<dbReference type="GO" id="GO:0045275">
    <property type="term" value="C:respiratory chain complex III"/>
    <property type="evidence" value="ECO:0007669"/>
    <property type="project" value="InterPro"/>
</dbReference>
<dbReference type="GO" id="GO:0046872">
    <property type="term" value="F:metal ion binding"/>
    <property type="evidence" value="ECO:0007669"/>
    <property type="project" value="UniProtKB-KW"/>
</dbReference>
<dbReference type="GO" id="GO:0008121">
    <property type="term" value="F:ubiquinol-cytochrome-c reductase activity"/>
    <property type="evidence" value="ECO:0007669"/>
    <property type="project" value="InterPro"/>
</dbReference>
<dbReference type="GO" id="GO:0006122">
    <property type="term" value="P:mitochondrial electron transport, ubiquinol to cytochrome c"/>
    <property type="evidence" value="ECO:0007669"/>
    <property type="project" value="TreeGrafter"/>
</dbReference>
<dbReference type="CDD" id="cd00290">
    <property type="entry name" value="cytochrome_b_C"/>
    <property type="match status" value="1"/>
</dbReference>
<dbReference type="CDD" id="cd00284">
    <property type="entry name" value="Cytochrome_b_N"/>
    <property type="match status" value="1"/>
</dbReference>
<dbReference type="FunFam" id="1.20.810.10:FF:000002">
    <property type="entry name" value="Cytochrome b"/>
    <property type="match status" value="1"/>
</dbReference>
<dbReference type="Gene3D" id="1.20.810.10">
    <property type="entry name" value="Cytochrome Bc1 Complex, Chain C"/>
    <property type="match status" value="1"/>
</dbReference>
<dbReference type="InterPro" id="IPR005798">
    <property type="entry name" value="Cyt_b/b6_C"/>
</dbReference>
<dbReference type="InterPro" id="IPR036150">
    <property type="entry name" value="Cyt_b/b6_C_sf"/>
</dbReference>
<dbReference type="InterPro" id="IPR005797">
    <property type="entry name" value="Cyt_b/b6_N"/>
</dbReference>
<dbReference type="InterPro" id="IPR027387">
    <property type="entry name" value="Cytb/b6-like_sf"/>
</dbReference>
<dbReference type="InterPro" id="IPR030689">
    <property type="entry name" value="Cytochrome_b"/>
</dbReference>
<dbReference type="InterPro" id="IPR048260">
    <property type="entry name" value="Cytochrome_b_C_euk/bac"/>
</dbReference>
<dbReference type="InterPro" id="IPR048259">
    <property type="entry name" value="Cytochrome_b_N_euk/bac"/>
</dbReference>
<dbReference type="InterPro" id="IPR016174">
    <property type="entry name" value="Di-haem_cyt_TM"/>
</dbReference>
<dbReference type="PANTHER" id="PTHR19271">
    <property type="entry name" value="CYTOCHROME B"/>
    <property type="match status" value="1"/>
</dbReference>
<dbReference type="PANTHER" id="PTHR19271:SF16">
    <property type="entry name" value="CYTOCHROME B"/>
    <property type="match status" value="1"/>
</dbReference>
<dbReference type="Pfam" id="PF00032">
    <property type="entry name" value="Cytochrom_B_C"/>
    <property type="match status" value="1"/>
</dbReference>
<dbReference type="Pfam" id="PF00033">
    <property type="entry name" value="Cytochrome_B"/>
    <property type="match status" value="1"/>
</dbReference>
<dbReference type="PIRSF" id="PIRSF038885">
    <property type="entry name" value="COB"/>
    <property type="match status" value="1"/>
</dbReference>
<dbReference type="SUPFAM" id="SSF81648">
    <property type="entry name" value="a domain/subunit of cytochrome bc1 complex (Ubiquinol-cytochrome c reductase)"/>
    <property type="match status" value="1"/>
</dbReference>
<dbReference type="SUPFAM" id="SSF81342">
    <property type="entry name" value="Transmembrane di-heme cytochromes"/>
    <property type="match status" value="1"/>
</dbReference>
<dbReference type="PROSITE" id="PS51003">
    <property type="entry name" value="CYTB_CTER"/>
    <property type="match status" value="1"/>
</dbReference>
<dbReference type="PROSITE" id="PS51002">
    <property type="entry name" value="CYTB_NTER"/>
    <property type="match status" value="1"/>
</dbReference>
<proteinExistence type="inferred from homology"/>
<protein>
    <recommendedName>
        <fullName>Cytochrome b</fullName>
    </recommendedName>
    <alternativeName>
        <fullName>Complex III subunit 3</fullName>
    </alternativeName>
    <alternativeName>
        <fullName>Complex III subunit III</fullName>
    </alternativeName>
    <alternativeName>
        <fullName>Cytochrome b-c1 complex subunit 3</fullName>
    </alternativeName>
    <alternativeName>
        <fullName>Ubiquinol-cytochrome-c reductase complex cytochrome b subunit</fullName>
    </alternativeName>
</protein>
<gene>
    <name type="primary">MT-CYB</name>
    <name type="synonym">COB</name>
    <name type="synonym">CYTB</name>
    <name type="synonym">MTCYB</name>
</gene>